<name>KUNIH_RHIMP</name>
<comment type="function">
    <text evidence="1 4">Midgut thrombin inhibitor that plays a major role in keeping the midgut microenvironment at low hemostatic and inflammatory tonus (By similarity) (PubMed:18286181). Also inhibits FXIa (F11), kallikrein (KLK1), neutrophil elastase (ELANE) and cathepsin G (CTSG), which play a role in the contact pathway of the coagulation cascade (By similarity) (PubMed:18286181). Also abrogates platelet aggregation by cathepsin G and plasmin, and attenuates tissue factor (F3) pathway inhibitor cleavage by elastase (By similarity) (PubMed:18286181). In vivo, inhibits thrombosis and promotes bleeding in mice (By similarity).</text>
</comment>
<comment type="subunit">
    <text evidence="4">Interacts with host thrombin and trypsin.</text>
</comment>
<comment type="subcellular location">
    <subcellularLocation>
        <location evidence="6">Secreted</location>
    </subcellularLocation>
</comment>
<comment type="tissue specificity">
    <text evidence="1">Expressed in the midgut.</text>
</comment>
<comment type="PTM">
    <text evidence="4">The N-terminus is blocked.</text>
</comment>
<organism>
    <name type="scientific">Rhipicephalus microplus</name>
    <name type="common">Cattle tick</name>
    <name type="synonym">Boophilus microplus</name>
    <dbReference type="NCBI Taxonomy" id="6941"/>
    <lineage>
        <taxon>Eukaryota</taxon>
        <taxon>Metazoa</taxon>
        <taxon>Ecdysozoa</taxon>
        <taxon>Arthropoda</taxon>
        <taxon>Chelicerata</taxon>
        <taxon>Arachnida</taxon>
        <taxon>Acari</taxon>
        <taxon>Parasitiformes</taxon>
        <taxon>Ixodida</taxon>
        <taxon>Ixodoidea</taxon>
        <taxon>Ixodidae</taxon>
        <taxon>Rhipicephalinae</taxon>
        <taxon>Rhipicephalus</taxon>
        <taxon>Boophilus</taxon>
    </lineage>
</organism>
<evidence type="ECO:0000250" key="1">
    <source>
        <dbReference type="UniProtKB" id="Q8WPI3"/>
    </source>
</evidence>
<evidence type="ECO:0000255" key="2"/>
<evidence type="ECO:0000255" key="3">
    <source>
        <dbReference type="PROSITE-ProRule" id="PRU00031"/>
    </source>
</evidence>
<evidence type="ECO:0000269" key="4">
    <source>
    </source>
</evidence>
<evidence type="ECO:0000303" key="5">
    <source>
    </source>
</evidence>
<evidence type="ECO:0000305" key="6">
    <source>
    </source>
</evidence>
<evidence type="ECO:0007744" key="7">
    <source>
        <dbReference type="PDB" id="2ODY"/>
    </source>
</evidence>
<evidence type="ECO:0007829" key="8">
    <source>
        <dbReference type="PDB" id="2ODY"/>
    </source>
</evidence>
<accession>Q8WPI2</accession>
<dbReference type="EMBL" id="AJ304447">
    <property type="protein sequence ID" value="CAC82583.1"/>
    <property type="molecule type" value="mRNA"/>
</dbReference>
<dbReference type="PDB" id="2ODY">
    <property type="method" value="X-ray"/>
    <property type="resolution" value="2.35 A"/>
    <property type="chains" value="E/F=16-142"/>
</dbReference>
<dbReference type="PDBsum" id="2ODY"/>
<dbReference type="SMR" id="Q8WPI2"/>
<dbReference type="MEROPS" id="I02.020"/>
<dbReference type="VEuPathDB" id="VectorBase:LOC119167388"/>
<dbReference type="OrthoDB" id="4473401at2759"/>
<dbReference type="EvolutionaryTrace" id="Q8WPI2"/>
<dbReference type="GO" id="GO:0005615">
    <property type="term" value="C:extracellular space"/>
    <property type="evidence" value="ECO:0007669"/>
    <property type="project" value="TreeGrafter"/>
</dbReference>
<dbReference type="GO" id="GO:0004867">
    <property type="term" value="F:serine-type endopeptidase inhibitor activity"/>
    <property type="evidence" value="ECO:0007669"/>
    <property type="project" value="UniProtKB-KW"/>
</dbReference>
<dbReference type="GO" id="GO:0090729">
    <property type="term" value="F:toxin activity"/>
    <property type="evidence" value="ECO:0007669"/>
    <property type="project" value="UniProtKB-KW"/>
</dbReference>
<dbReference type="GO" id="GO:0044562">
    <property type="term" value="P:envenomation resulting in negative regulation of voltage-gated potassium channel activity in another organism"/>
    <property type="evidence" value="ECO:0007669"/>
    <property type="project" value="UniProtKB-ARBA"/>
</dbReference>
<dbReference type="CDD" id="cd22599">
    <property type="entry name" value="Kunitz_boophilin_1-like"/>
    <property type="match status" value="1"/>
</dbReference>
<dbReference type="CDD" id="cd22600">
    <property type="entry name" value="Kunitz_boophilin_2-like"/>
    <property type="match status" value="1"/>
</dbReference>
<dbReference type="FunFam" id="4.10.410.10:FF:000020">
    <property type="entry name" value="Collagen, type VI, alpha 3"/>
    <property type="match status" value="1"/>
</dbReference>
<dbReference type="FunFam" id="4.10.410.10:FF:000021">
    <property type="entry name" value="Serine protease inhibitor, putative"/>
    <property type="match status" value="1"/>
</dbReference>
<dbReference type="Gene3D" id="4.10.410.10">
    <property type="entry name" value="Pancreatic trypsin inhibitor Kunitz domain"/>
    <property type="match status" value="2"/>
</dbReference>
<dbReference type="InterPro" id="IPR002223">
    <property type="entry name" value="Kunitz_BPTI"/>
</dbReference>
<dbReference type="InterPro" id="IPR036880">
    <property type="entry name" value="Kunitz_BPTI_sf"/>
</dbReference>
<dbReference type="InterPro" id="IPR020901">
    <property type="entry name" value="Prtase_inh_Kunz-CS"/>
</dbReference>
<dbReference type="InterPro" id="IPR050098">
    <property type="entry name" value="TFPI/VKTCI-like"/>
</dbReference>
<dbReference type="PANTHER" id="PTHR10083:SF374">
    <property type="entry name" value="BPTI_KUNITZ INHIBITOR DOMAIN-CONTAINING PROTEIN"/>
    <property type="match status" value="1"/>
</dbReference>
<dbReference type="PANTHER" id="PTHR10083">
    <property type="entry name" value="KUNITZ-TYPE PROTEASE INHIBITOR-RELATED"/>
    <property type="match status" value="1"/>
</dbReference>
<dbReference type="Pfam" id="PF00014">
    <property type="entry name" value="Kunitz_BPTI"/>
    <property type="match status" value="2"/>
</dbReference>
<dbReference type="PRINTS" id="PR00759">
    <property type="entry name" value="BASICPTASE"/>
</dbReference>
<dbReference type="SMART" id="SM00131">
    <property type="entry name" value="KU"/>
    <property type="match status" value="2"/>
</dbReference>
<dbReference type="SUPFAM" id="SSF57362">
    <property type="entry name" value="BPTI-like"/>
    <property type="match status" value="2"/>
</dbReference>
<dbReference type="PROSITE" id="PS00280">
    <property type="entry name" value="BPTI_KUNITZ_1"/>
    <property type="match status" value="2"/>
</dbReference>
<dbReference type="PROSITE" id="PS50279">
    <property type="entry name" value="BPTI_KUNITZ_2"/>
    <property type="match status" value="2"/>
</dbReference>
<reference key="1">
    <citation type="journal article" date="2008" name="PLoS ONE">
        <title>Isolation, cloning and structural characterisation of boophilin, a multifunctional Kunitz-type proteinase inhibitor from the cattle tick.</title>
        <authorList>
            <person name="Macedo-Ribeiro S."/>
            <person name="Almeida C."/>
            <person name="Calisto B.M."/>
            <person name="Friedrich T."/>
            <person name="Mentele R."/>
            <person name="Sturzebecher J."/>
            <person name="Fuentes-Prior P."/>
            <person name="Pereira P.J."/>
        </authorList>
    </citation>
    <scope>NUCLEOTIDE SEQUENCE [MRNA]</scope>
    <scope>PARTIAL PROTEIN SEQUENCE</scope>
    <scope>X-RAY CRYSTALLOGRAPHY (2.35 ANGSTROMS) OF 16-142 IN COMPLEX WITH BOVINE THROMBIN</scope>
    <scope>DISULFIDE BONDS</scope>
    <scope>INTERACTION WITH HOST THROMBIN AND TRYPSIN</scope>
    <scope>FUNCTION</scope>
    <scope>PROBABLE PYROGLUTAMATE FORMATION AT GLN-16</scope>
    <scope>RECOMBINANT EXPRESSION</scope>
</reference>
<protein>
    <recommendedName>
        <fullName evidence="5">Boophilin-H2</fullName>
    </recommendedName>
</protein>
<keyword id="KW-0002">3D-structure</keyword>
<keyword id="KW-1203">Blood coagulation cascade inhibiting toxin</keyword>
<keyword id="KW-0903">Direct protein sequencing</keyword>
<keyword id="KW-1015">Disulfide bond</keyword>
<keyword id="KW-1199">Hemostasis impairing toxin</keyword>
<keyword id="KW-1201">Platelet aggregation inhibiting toxin</keyword>
<keyword id="KW-0646">Protease inhibitor</keyword>
<keyword id="KW-0873">Pyrrolidone carboxylic acid</keyword>
<keyword id="KW-0677">Repeat</keyword>
<keyword id="KW-0964">Secreted</keyword>
<keyword id="KW-0722">Serine protease inhibitor</keyword>
<keyword id="KW-0732">Signal</keyword>
<keyword id="KW-0800">Toxin</keyword>
<feature type="signal peptide" evidence="2">
    <location>
        <begin position="1"/>
        <end position="15"/>
    </location>
</feature>
<feature type="chain" id="PRO_5000066993" description="Boophilin-H2">
    <location>
        <begin position="16"/>
        <end position="142"/>
    </location>
</feature>
<feature type="domain" description="BPTI/Kunitz inhibitor 1" evidence="3">
    <location>
        <begin position="21"/>
        <end position="71"/>
    </location>
</feature>
<feature type="domain" description="BPTI/Kunitz inhibitor 2" evidence="3">
    <location>
        <begin position="89"/>
        <end position="139"/>
    </location>
</feature>
<feature type="modified residue" description="Pyrrolidone carboxylic acid" evidence="6">
    <location>
        <position position="16"/>
    </location>
</feature>
<feature type="disulfide bond" evidence="4 7">
    <location>
        <begin position="21"/>
        <end position="71"/>
    </location>
</feature>
<feature type="disulfide bond" evidence="4 7">
    <location>
        <begin position="30"/>
        <end position="54"/>
    </location>
</feature>
<feature type="disulfide bond" evidence="4 7">
    <location>
        <begin position="46"/>
        <end position="67"/>
    </location>
</feature>
<feature type="disulfide bond" evidence="4 7">
    <location>
        <begin position="89"/>
        <end position="139"/>
    </location>
</feature>
<feature type="disulfide bond" evidence="4 7">
    <location>
        <begin position="98"/>
        <end position="122"/>
    </location>
</feature>
<feature type="disulfide bond" evidence="4 7">
    <location>
        <begin position="114"/>
        <end position="135"/>
    </location>
</feature>
<feature type="helix" evidence="8">
    <location>
        <begin position="19"/>
        <end position="22"/>
    </location>
</feature>
<feature type="strand" evidence="8">
    <location>
        <begin position="34"/>
        <end position="40"/>
    </location>
</feature>
<feature type="turn" evidence="8">
    <location>
        <begin position="41"/>
        <end position="44"/>
    </location>
</feature>
<feature type="strand" evidence="8">
    <location>
        <begin position="45"/>
        <end position="51"/>
    </location>
</feature>
<feature type="strand" evidence="8">
    <location>
        <begin position="61"/>
        <end position="63"/>
    </location>
</feature>
<feature type="helix" evidence="8">
    <location>
        <begin position="64"/>
        <end position="71"/>
    </location>
</feature>
<feature type="helix" evidence="8">
    <location>
        <begin position="85"/>
        <end position="88"/>
    </location>
</feature>
<feature type="strand" evidence="8">
    <location>
        <begin position="102"/>
        <end position="108"/>
    </location>
</feature>
<feature type="turn" evidence="8">
    <location>
        <begin position="109"/>
        <end position="112"/>
    </location>
</feature>
<feature type="strand" evidence="8">
    <location>
        <begin position="113"/>
        <end position="119"/>
    </location>
</feature>
<feature type="strand" evidence="8">
    <location>
        <begin position="129"/>
        <end position="131"/>
    </location>
</feature>
<feature type="helix" evidence="8">
    <location>
        <begin position="132"/>
        <end position="139"/>
    </location>
</feature>
<proteinExistence type="evidence at protein level"/>
<sequence>MKCIILLAVLGTAFAQRNGFCRLPADEGICKALIPRFYFNTETGKCTMFSYGGCGGNENNFETIEECQKACGAPERVNDFESADFKTGCEPAADSGSCAGQLERWFYNVQSGECETFVYGGCGGNDNNYESEEECELVCKNM</sequence>